<reference key="1">
    <citation type="submission" date="2008-06" db="EMBL/GenBank/DDBJ databases">
        <title>Complete sequence of chromosome of Prosthecochloris aestuarii DSM 271.</title>
        <authorList>
            <consortium name="US DOE Joint Genome Institute"/>
            <person name="Lucas S."/>
            <person name="Copeland A."/>
            <person name="Lapidus A."/>
            <person name="Glavina del Rio T."/>
            <person name="Dalin E."/>
            <person name="Tice H."/>
            <person name="Bruce D."/>
            <person name="Goodwin L."/>
            <person name="Pitluck S."/>
            <person name="Schmutz J."/>
            <person name="Larimer F."/>
            <person name="Land M."/>
            <person name="Hauser L."/>
            <person name="Kyrpides N."/>
            <person name="Anderson I."/>
            <person name="Liu Z."/>
            <person name="Li T."/>
            <person name="Zhao F."/>
            <person name="Overmann J."/>
            <person name="Bryant D.A."/>
            <person name="Richardson P."/>
        </authorList>
    </citation>
    <scope>NUCLEOTIDE SEQUENCE [LARGE SCALE GENOMIC DNA]</scope>
    <source>
        <strain>DSM 271 / SK 413</strain>
    </source>
</reference>
<comment type="function">
    <text evidence="1">Responsible for the release of ribosomes from messenger RNA at the termination of protein biosynthesis. May increase the efficiency of translation by recycling ribosomes from one round of translation to another.</text>
</comment>
<comment type="subcellular location">
    <subcellularLocation>
        <location evidence="1">Cytoplasm</location>
    </subcellularLocation>
</comment>
<comment type="similarity">
    <text evidence="1">Belongs to the RRF family.</text>
</comment>
<sequence>MSARDVISKGEAKMKKSIESFQHEIASVRTGKATTALLDRVKVDAYGQQMPLKQVGNVGVQDAHTLMVQVWDKSMVAATEKAIRDANLGLNPAAEGQSIRVSIPPLTEERRKEYVKLTRKYSEDSKVALRNLRREILHALDKLEKDKQISEDEKSRGKKDADDLVHKYEKRILDIVGQKEKEIMEV</sequence>
<dbReference type="EMBL" id="CP001108">
    <property type="protein sequence ID" value="ACF46874.1"/>
    <property type="molecule type" value="Genomic_DNA"/>
</dbReference>
<dbReference type="RefSeq" id="WP_012506407.1">
    <property type="nucleotide sequence ID" value="NC_011059.1"/>
</dbReference>
<dbReference type="SMR" id="B4S4H8"/>
<dbReference type="STRING" id="290512.Paes_1862"/>
<dbReference type="KEGG" id="paa:Paes_1862"/>
<dbReference type="eggNOG" id="COG0233">
    <property type="taxonomic scope" value="Bacteria"/>
</dbReference>
<dbReference type="HOGENOM" id="CLU_073981_2_0_10"/>
<dbReference type="Proteomes" id="UP000002725">
    <property type="component" value="Chromosome"/>
</dbReference>
<dbReference type="GO" id="GO:0005829">
    <property type="term" value="C:cytosol"/>
    <property type="evidence" value="ECO:0007669"/>
    <property type="project" value="GOC"/>
</dbReference>
<dbReference type="GO" id="GO:0043023">
    <property type="term" value="F:ribosomal large subunit binding"/>
    <property type="evidence" value="ECO:0007669"/>
    <property type="project" value="TreeGrafter"/>
</dbReference>
<dbReference type="GO" id="GO:0002184">
    <property type="term" value="P:cytoplasmic translational termination"/>
    <property type="evidence" value="ECO:0007669"/>
    <property type="project" value="TreeGrafter"/>
</dbReference>
<dbReference type="CDD" id="cd00520">
    <property type="entry name" value="RRF"/>
    <property type="match status" value="1"/>
</dbReference>
<dbReference type="FunFam" id="3.30.1360.40:FF:000001">
    <property type="entry name" value="Ribosome-recycling factor"/>
    <property type="match status" value="1"/>
</dbReference>
<dbReference type="Gene3D" id="3.30.1360.40">
    <property type="match status" value="1"/>
</dbReference>
<dbReference type="Gene3D" id="1.10.132.20">
    <property type="entry name" value="Ribosome-recycling factor"/>
    <property type="match status" value="1"/>
</dbReference>
<dbReference type="HAMAP" id="MF_00040">
    <property type="entry name" value="RRF"/>
    <property type="match status" value="1"/>
</dbReference>
<dbReference type="InterPro" id="IPR002661">
    <property type="entry name" value="Ribosome_recyc_fac"/>
</dbReference>
<dbReference type="InterPro" id="IPR023584">
    <property type="entry name" value="Ribosome_recyc_fac_dom"/>
</dbReference>
<dbReference type="InterPro" id="IPR036191">
    <property type="entry name" value="RRF_sf"/>
</dbReference>
<dbReference type="NCBIfam" id="TIGR00496">
    <property type="entry name" value="frr"/>
    <property type="match status" value="1"/>
</dbReference>
<dbReference type="PANTHER" id="PTHR20982:SF3">
    <property type="entry name" value="MITOCHONDRIAL RIBOSOME RECYCLING FACTOR PSEUDO 1"/>
    <property type="match status" value="1"/>
</dbReference>
<dbReference type="PANTHER" id="PTHR20982">
    <property type="entry name" value="RIBOSOME RECYCLING FACTOR"/>
    <property type="match status" value="1"/>
</dbReference>
<dbReference type="Pfam" id="PF01765">
    <property type="entry name" value="RRF"/>
    <property type="match status" value="1"/>
</dbReference>
<dbReference type="SUPFAM" id="SSF55194">
    <property type="entry name" value="Ribosome recycling factor, RRF"/>
    <property type="match status" value="1"/>
</dbReference>
<evidence type="ECO:0000255" key="1">
    <source>
        <dbReference type="HAMAP-Rule" id="MF_00040"/>
    </source>
</evidence>
<keyword id="KW-0963">Cytoplasm</keyword>
<keyword id="KW-0648">Protein biosynthesis</keyword>
<accession>B4S4H8</accession>
<organism>
    <name type="scientific">Prosthecochloris aestuarii (strain DSM 271 / SK 413)</name>
    <dbReference type="NCBI Taxonomy" id="290512"/>
    <lineage>
        <taxon>Bacteria</taxon>
        <taxon>Pseudomonadati</taxon>
        <taxon>Chlorobiota</taxon>
        <taxon>Chlorobiia</taxon>
        <taxon>Chlorobiales</taxon>
        <taxon>Chlorobiaceae</taxon>
        <taxon>Prosthecochloris</taxon>
    </lineage>
</organism>
<protein>
    <recommendedName>
        <fullName evidence="1">Ribosome-recycling factor</fullName>
        <shortName evidence="1">RRF</shortName>
    </recommendedName>
    <alternativeName>
        <fullName evidence="1">Ribosome-releasing factor</fullName>
    </alternativeName>
</protein>
<feature type="chain" id="PRO_1000090769" description="Ribosome-recycling factor">
    <location>
        <begin position="1"/>
        <end position="186"/>
    </location>
</feature>
<name>RRF_PROA2</name>
<proteinExistence type="inferred from homology"/>
<gene>
    <name evidence="1" type="primary">frr</name>
    <name type="ordered locus">Paes_1862</name>
</gene>